<organism>
    <name type="scientific">Anaeromyxobacter dehalogenans (strain 2CP-1 / ATCC BAA-258)</name>
    <dbReference type="NCBI Taxonomy" id="455488"/>
    <lineage>
        <taxon>Bacteria</taxon>
        <taxon>Pseudomonadati</taxon>
        <taxon>Myxococcota</taxon>
        <taxon>Myxococcia</taxon>
        <taxon>Myxococcales</taxon>
        <taxon>Cystobacterineae</taxon>
        <taxon>Anaeromyxobacteraceae</taxon>
        <taxon>Anaeromyxobacter</taxon>
    </lineage>
</organism>
<evidence type="ECO:0000255" key="1">
    <source>
        <dbReference type="HAMAP-Rule" id="MF_00336"/>
    </source>
</evidence>
<feature type="chain" id="PRO_1000133198" description="ATP-dependent dethiobiotin synthetase BioD">
    <location>
        <begin position="1"/>
        <end position="223"/>
    </location>
</feature>
<feature type="active site" evidence="1">
    <location>
        <position position="37"/>
    </location>
</feature>
<feature type="binding site" evidence="1">
    <location>
        <position position="16"/>
    </location>
    <ligand>
        <name>Mg(2+)</name>
        <dbReference type="ChEBI" id="CHEBI:18420"/>
    </ligand>
</feature>
<feature type="binding site" evidence="1">
    <location>
        <position position="41"/>
    </location>
    <ligand>
        <name>substrate</name>
    </ligand>
</feature>
<feature type="binding site" evidence="1">
    <location>
        <position position="50"/>
    </location>
    <ligand>
        <name>ATP</name>
        <dbReference type="ChEBI" id="CHEBI:30616"/>
    </ligand>
</feature>
<feature type="binding site" evidence="1">
    <location>
        <position position="50"/>
    </location>
    <ligand>
        <name>Mg(2+)</name>
        <dbReference type="ChEBI" id="CHEBI:18420"/>
    </ligand>
</feature>
<feature type="binding site" evidence="1">
    <location>
        <begin position="111"/>
        <end position="114"/>
    </location>
    <ligand>
        <name>ATP</name>
        <dbReference type="ChEBI" id="CHEBI:30616"/>
    </ligand>
</feature>
<feature type="binding site" evidence="1">
    <location>
        <position position="111"/>
    </location>
    <ligand>
        <name>Mg(2+)</name>
        <dbReference type="ChEBI" id="CHEBI:18420"/>
    </ligand>
</feature>
<feature type="binding site" evidence="1">
    <location>
        <begin position="171"/>
        <end position="172"/>
    </location>
    <ligand>
        <name>ATP</name>
        <dbReference type="ChEBI" id="CHEBI:30616"/>
    </ligand>
</feature>
<keyword id="KW-0067">ATP-binding</keyword>
<keyword id="KW-0093">Biotin biosynthesis</keyword>
<keyword id="KW-0963">Cytoplasm</keyword>
<keyword id="KW-0436">Ligase</keyword>
<keyword id="KW-0460">Magnesium</keyword>
<keyword id="KW-0479">Metal-binding</keyword>
<keyword id="KW-0547">Nucleotide-binding</keyword>
<protein>
    <recommendedName>
        <fullName evidence="1">ATP-dependent dethiobiotin synthetase BioD</fullName>
        <ecNumber evidence="1">6.3.3.3</ecNumber>
    </recommendedName>
    <alternativeName>
        <fullName evidence="1">DTB synthetase</fullName>
        <shortName evidence="1">DTBS</shortName>
    </alternativeName>
    <alternativeName>
        <fullName evidence="1">Dethiobiotin synthase</fullName>
    </alternativeName>
</protein>
<accession>B8J7V5</accession>
<sequence length="223" mass="23001">MRGLFVTGTDTGVGKTEVACALVRAARAAGLDAVGMKPAQSGHVPGEPSDAERLREASDRVEPLEAICPYTFGAPLAPAAAARLEGREVSLARVVEAARALAARHAAVVVEGAGGLLVPLTARETHADLAAALGLPVLVVARAGLGTVNHTALTVEALERRGLAVAGIVLNRTGPEDDPSVPLNAAEIARLTYREPLALLPWEPDIARRARSLGSILGAKIQF</sequence>
<name>BIOD_ANAD2</name>
<dbReference type="EC" id="6.3.3.3" evidence="1"/>
<dbReference type="EMBL" id="CP001359">
    <property type="protein sequence ID" value="ACL63447.1"/>
    <property type="molecule type" value="Genomic_DNA"/>
</dbReference>
<dbReference type="RefSeq" id="WP_012631537.1">
    <property type="nucleotide sequence ID" value="NC_011891.1"/>
</dbReference>
<dbReference type="SMR" id="B8J7V5"/>
<dbReference type="KEGG" id="acp:A2cp1_0088"/>
<dbReference type="HOGENOM" id="CLU_072551_3_1_7"/>
<dbReference type="UniPathway" id="UPA00078">
    <property type="reaction ID" value="UER00161"/>
</dbReference>
<dbReference type="Proteomes" id="UP000007089">
    <property type="component" value="Chromosome"/>
</dbReference>
<dbReference type="GO" id="GO:0005829">
    <property type="term" value="C:cytosol"/>
    <property type="evidence" value="ECO:0007669"/>
    <property type="project" value="TreeGrafter"/>
</dbReference>
<dbReference type="GO" id="GO:0005524">
    <property type="term" value="F:ATP binding"/>
    <property type="evidence" value="ECO:0007669"/>
    <property type="project" value="UniProtKB-UniRule"/>
</dbReference>
<dbReference type="GO" id="GO:0004141">
    <property type="term" value="F:dethiobiotin synthase activity"/>
    <property type="evidence" value="ECO:0007669"/>
    <property type="project" value="UniProtKB-UniRule"/>
</dbReference>
<dbReference type="GO" id="GO:0000287">
    <property type="term" value="F:magnesium ion binding"/>
    <property type="evidence" value="ECO:0007669"/>
    <property type="project" value="UniProtKB-UniRule"/>
</dbReference>
<dbReference type="GO" id="GO:0009102">
    <property type="term" value="P:biotin biosynthetic process"/>
    <property type="evidence" value="ECO:0007669"/>
    <property type="project" value="UniProtKB-UniRule"/>
</dbReference>
<dbReference type="CDD" id="cd03109">
    <property type="entry name" value="DTBS"/>
    <property type="match status" value="1"/>
</dbReference>
<dbReference type="Gene3D" id="3.40.50.300">
    <property type="entry name" value="P-loop containing nucleotide triphosphate hydrolases"/>
    <property type="match status" value="1"/>
</dbReference>
<dbReference type="HAMAP" id="MF_00336">
    <property type="entry name" value="BioD"/>
    <property type="match status" value="1"/>
</dbReference>
<dbReference type="InterPro" id="IPR004472">
    <property type="entry name" value="DTB_synth_BioD"/>
</dbReference>
<dbReference type="InterPro" id="IPR027417">
    <property type="entry name" value="P-loop_NTPase"/>
</dbReference>
<dbReference type="NCBIfam" id="TIGR00347">
    <property type="entry name" value="bioD"/>
    <property type="match status" value="1"/>
</dbReference>
<dbReference type="PANTHER" id="PTHR43210">
    <property type="entry name" value="DETHIOBIOTIN SYNTHETASE"/>
    <property type="match status" value="1"/>
</dbReference>
<dbReference type="PANTHER" id="PTHR43210:SF5">
    <property type="entry name" value="DETHIOBIOTIN SYNTHETASE"/>
    <property type="match status" value="1"/>
</dbReference>
<dbReference type="Pfam" id="PF13500">
    <property type="entry name" value="AAA_26"/>
    <property type="match status" value="1"/>
</dbReference>
<dbReference type="PIRSF" id="PIRSF006755">
    <property type="entry name" value="DTB_synth"/>
    <property type="match status" value="1"/>
</dbReference>
<dbReference type="SUPFAM" id="SSF52540">
    <property type="entry name" value="P-loop containing nucleoside triphosphate hydrolases"/>
    <property type="match status" value="1"/>
</dbReference>
<proteinExistence type="inferred from homology"/>
<comment type="function">
    <text evidence="1">Catalyzes a mechanistically unusual reaction, the ATP-dependent insertion of CO2 between the N7 and N8 nitrogen atoms of 7,8-diaminopelargonic acid (DAPA, also called 7,8-diammoniononanoate) to form a ureido ring.</text>
</comment>
<comment type="catalytic activity">
    <reaction evidence="1">
        <text>(7R,8S)-7,8-diammoniononanoate + CO2 + ATP = (4R,5S)-dethiobiotin + ADP + phosphate + 3 H(+)</text>
        <dbReference type="Rhea" id="RHEA:15805"/>
        <dbReference type="ChEBI" id="CHEBI:15378"/>
        <dbReference type="ChEBI" id="CHEBI:16526"/>
        <dbReference type="ChEBI" id="CHEBI:30616"/>
        <dbReference type="ChEBI" id="CHEBI:43474"/>
        <dbReference type="ChEBI" id="CHEBI:149469"/>
        <dbReference type="ChEBI" id="CHEBI:149473"/>
        <dbReference type="ChEBI" id="CHEBI:456216"/>
        <dbReference type="EC" id="6.3.3.3"/>
    </reaction>
</comment>
<comment type="cofactor">
    <cofactor evidence="1">
        <name>Mg(2+)</name>
        <dbReference type="ChEBI" id="CHEBI:18420"/>
    </cofactor>
</comment>
<comment type="pathway">
    <text evidence="1">Cofactor biosynthesis; biotin biosynthesis; biotin from 7,8-diaminononanoate: step 1/2.</text>
</comment>
<comment type="subunit">
    <text evidence="1">Homodimer.</text>
</comment>
<comment type="subcellular location">
    <subcellularLocation>
        <location evidence="1">Cytoplasm</location>
    </subcellularLocation>
</comment>
<comment type="similarity">
    <text evidence="1">Belongs to the dethiobiotin synthetase family.</text>
</comment>
<gene>
    <name evidence="1" type="primary">bioD</name>
    <name type="ordered locus">A2cp1_0088</name>
</gene>
<reference key="1">
    <citation type="submission" date="2009-01" db="EMBL/GenBank/DDBJ databases">
        <title>Complete sequence of Anaeromyxobacter dehalogenans 2CP-1.</title>
        <authorList>
            <person name="Lucas S."/>
            <person name="Copeland A."/>
            <person name="Lapidus A."/>
            <person name="Glavina del Rio T."/>
            <person name="Dalin E."/>
            <person name="Tice H."/>
            <person name="Bruce D."/>
            <person name="Goodwin L."/>
            <person name="Pitluck S."/>
            <person name="Saunders E."/>
            <person name="Brettin T."/>
            <person name="Detter J.C."/>
            <person name="Han C."/>
            <person name="Larimer F."/>
            <person name="Land M."/>
            <person name="Hauser L."/>
            <person name="Kyrpides N."/>
            <person name="Ovchinnikova G."/>
            <person name="Beliaev A.S."/>
            <person name="Richardson P."/>
        </authorList>
    </citation>
    <scope>NUCLEOTIDE SEQUENCE [LARGE SCALE GENOMIC DNA]</scope>
    <source>
        <strain>2CP-1 / ATCC BAA-258</strain>
    </source>
</reference>